<evidence type="ECO:0000250" key="1"/>
<evidence type="ECO:0000255" key="2"/>
<evidence type="ECO:0000305" key="3"/>
<accession>P9WP93</accession>
<accession>L0T982</accession>
<accession>Q10518</accession>
<protein>
    <recommendedName>
        <fullName>Cobalamin biosynthesis protein CobD</fullName>
    </recommendedName>
</protein>
<proteinExistence type="evidence at protein level"/>
<keyword id="KW-1003">Cell membrane</keyword>
<keyword id="KW-0169">Cobalamin biosynthesis</keyword>
<keyword id="KW-0472">Membrane</keyword>
<keyword id="KW-1185">Reference proteome</keyword>
<keyword id="KW-0812">Transmembrane</keyword>
<keyword id="KW-1133">Transmembrane helix</keyword>
<gene>
    <name type="primary">cobD</name>
    <name type="ordered locus">Rv2236c</name>
    <name type="ORF">MTCY427.17c</name>
</gene>
<sequence>MFASTWQTRAVGVLIGCLLDVVFGDPKRGHPVALFGRAAAKLEQITYRDGRVAGAVHVGLLVGAVGLLGAALQRLPGRSWPVAATATATWAALGGTSLARTGRQISDLLERDDVEAARRLLPSLCGRDPAQLGGPGLTRAALESVAENTADAQVVPLLWAASSGVPAVLGYRAINTLDSMIGYRSPRYLRFGWAAARLDDWANYVGARATAVLVVICAPVVGGSPRGAVRAWRRDAARHPSPNAGVVEAAFAGALDVRLGGPTRYHHELQIRPTLGDGRSPKVADLRRAVVLSRVVQAGAAVLAVMLVYRRRP</sequence>
<organism>
    <name type="scientific">Mycobacterium tuberculosis (strain ATCC 25618 / H37Rv)</name>
    <dbReference type="NCBI Taxonomy" id="83332"/>
    <lineage>
        <taxon>Bacteria</taxon>
        <taxon>Bacillati</taxon>
        <taxon>Actinomycetota</taxon>
        <taxon>Actinomycetes</taxon>
        <taxon>Mycobacteriales</taxon>
        <taxon>Mycobacteriaceae</taxon>
        <taxon>Mycobacterium</taxon>
        <taxon>Mycobacterium tuberculosis complex</taxon>
    </lineage>
</organism>
<reference key="1">
    <citation type="journal article" date="1998" name="Nature">
        <title>Deciphering the biology of Mycobacterium tuberculosis from the complete genome sequence.</title>
        <authorList>
            <person name="Cole S.T."/>
            <person name="Brosch R."/>
            <person name="Parkhill J."/>
            <person name="Garnier T."/>
            <person name="Churcher C.M."/>
            <person name="Harris D.E."/>
            <person name="Gordon S.V."/>
            <person name="Eiglmeier K."/>
            <person name="Gas S."/>
            <person name="Barry C.E. III"/>
            <person name="Tekaia F."/>
            <person name="Badcock K."/>
            <person name="Basham D."/>
            <person name="Brown D."/>
            <person name="Chillingworth T."/>
            <person name="Connor R."/>
            <person name="Davies R.M."/>
            <person name="Devlin K."/>
            <person name="Feltwell T."/>
            <person name="Gentles S."/>
            <person name="Hamlin N."/>
            <person name="Holroyd S."/>
            <person name="Hornsby T."/>
            <person name="Jagels K."/>
            <person name="Krogh A."/>
            <person name="McLean J."/>
            <person name="Moule S."/>
            <person name="Murphy L.D."/>
            <person name="Oliver S."/>
            <person name="Osborne J."/>
            <person name="Quail M.A."/>
            <person name="Rajandream M.A."/>
            <person name="Rogers J."/>
            <person name="Rutter S."/>
            <person name="Seeger K."/>
            <person name="Skelton S."/>
            <person name="Squares S."/>
            <person name="Squares R."/>
            <person name="Sulston J.E."/>
            <person name="Taylor K."/>
            <person name="Whitehead S."/>
            <person name="Barrell B.G."/>
        </authorList>
    </citation>
    <scope>NUCLEOTIDE SEQUENCE [LARGE SCALE GENOMIC DNA]</scope>
    <source>
        <strain>ATCC 25618 / H37Rv</strain>
    </source>
</reference>
<reference key="2">
    <citation type="journal article" date="2011" name="Mol. Cell. Proteomics">
        <title>Proteogenomic analysis of Mycobacterium tuberculosis by high resolution mass spectrometry.</title>
        <authorList>
            <person name="Kelkar D.S."/>
            <person name="Kumar D."/>
            <person name="Kumar P."/>
            <person name="Balakrishnan L."/>
            <person name="Muthusamy B."/>
            <person name="Yadav A.K."/>
            <person name="Shrivastava P."/>
            <person name="Marimuthu A."/>
            <person name="Anand S."/>
            <person name="Sundaram H."/>
            <person name="Kingsbury R."/>
            <person name="Harsha H.C."/>
            <person name="Nair B."/>
            <person name="Prasad T.S."/>
            <person name="Chauhan D.S."/>
            <person name="Katoch K."/>
            <person name="Katoch V.M."/>
            <person name="Kumar P."/>
            <person name="Chaerkady R."/>
            <person name="Ramachandran S."/>
            <person name="Dash D."/>
            <person name="Pandey A."/>
        </authorList>
    </citation>
    <scope>IDENTIFICATION BY MASS SPECTROMETRY [LARGE SCALE ANALYSIS]</scope>
    <source>
        <strain>ATCC 25618 / H37Rv</strain>
    </source>
</reference>
<feature type="chain" id="PRO_0000150933" description="Cobalamin biosynthesis protein CobD">
    <location>
        <begin position="1"/>
        <end position="313"/>
    </location>
</feature>
<feature type="transmembrane region" description="Helical" evidence="2">
    <location>
        <begin position="52"/>
        <end position="72"/>
    </location>
</feature>
<feature type="transmembrane region" description="Helical" evidence="2">
    <location>
        <begin position="79"/>
        <end position="99"/>
    </location>
</feature>
<feature type="transmembrane region" description="Helical" evidence="2">
    <location>
        <begin position="154"/>
        <end position="174"/>
    </location>
</feature>
<feature type="transmembrane region" description="Helical" evidence="2">
    <location>
        <begin position="204"/>
        <end position="224"/>
    </location>
</feature>
<feature type="transmembrane region" description="Helical" evidence="2">
    <location>
        <begin position="289"/>
        <end position="309"/>
    </location>
</feature>
<name>COBD_MYCTU</name>
<dbReference type="EMBL" id="AL123456">
    <property type="protein sequence ID" value="CCP45015.1"/>
    <property type="molecule type" value="Genomic_DNA"/>
</dbReference>
<dbReference type="PIR" id="H70777">
    <property type="entry name" value="H70777"/>
</dbReference>
<dbReference type="RefSeq" id="NP_216752.1">
    <property type="nucleotide sequence ID" value="NC_000962.3"/>
</dbReference>
<dbReference type="RefSeq" id="WP_009936469.1">
    <property type="nucleotide sequence ID" value="NZ_NVQJ01000008.1"/>
</dbReference>
<dbReference type="FunCoup" id="P9WP93">
    <property type="interactions" value="132"/>
</dbReference>
<dbReference type="STRING" id="83332.Rv2236c"/>
<dbReference type="PaxDb" id="83332-Rv2236c"/>
<dbReference type="GeneID" id="887513"/>
<dbReference type="KEGG" id="mtu:Rv2236c"/>
<dbReference type="KEGG" id="mtv:RVBD_2236c"/>
<dbReference type="TubercuList" id="Rv2236c"/>
<dbReference type="eggNOG" id="COG1270">
    <property type="taxonomic scope" value="Bacteria"/>
</dbReference>
<dbReference type="InParanoid" id="P9WP93"/>
<dbReference type="OrthoDB" id="9811967at2"/>
<dbReference type="PhylomeDB" id="P9WP93"/>
<dbReference type="UniPathway" id="UPA00148"/>
<dbReference type="Proteomes" id="UP000001584">
    <property type="component" value="Chromosome"/>
</dbReference>
<dbReference type="GO" id="GO:0005576">
    <property type="term" value="C:extracellular region"/>
    <property type="evidence" value="ECO:0007005"/>
    <property type="project" value="MTBBASE"/>
</dbReference>
<dbReference type="GO" id="GO:0005886">
    <property type="term" value="C:plasma membrane"/>
    <property type="evidence" value="ECO:0007005"/>
    <property type="project" value="MTBBASE"/>
</dbReference>
<dbReference type="GO" id="GO:0015420">
    <property type="term" value="F:ABC-type vitamin B12 transporter activity"/>
    <property type="evidence" value="ECO:0007669"/>
    <property type="project" value="UniProtKB-UniRule"/>
</dbReference>
<dbReference type="GO" id="GO:0048472">
    <property type="term" value="F:threonine-phosphate decarboxylase activity"/>
    <property type="evidence" value="ECO:0007669"/>
    <property type="project" value="InterPro"/>
</dbReference>
<dbReference type="GO" id="GO:0009236">
    <property type="term" value="P:cobalamin biosynthetic process"/>
    <property type="evidence" value="ECO:0007669"/>
    <property type="project" value="UniProtKB-UniRule"/>
</dbReference>
<dbReference type="HAMAP" id="MF_00024">
    <property type="entry name" value="CobD_CbiB"/>
    <property type="match status" value="1"/>
</dbReference>
<dbReference type="InterPro" id="IPR004485">
    <property type="entry name" value="Cobalamin_biosynth_CobD/CbiB"/>
</dbReference>
<dbReference type="NCBIfam" id="TIGR00380">
    <property type="entry name" value="cobal_cbiB"/>
    <property type="match status" value="1"/>
</dbReference>
<dbReference type="NCBIfam" id="NF002276">
    <property type="entry name" value="PRK01209.1-4"/>
    <property type="match status" value="1"/>
</dbReference>
<dbReference type="PANTHER" id="PTHR34308">
    <property type="entry name" value="COBALAMIN BIOSYNTHESIS PROTEIN CBIB"/>
    <property type="match status" value="1"/>
</dbReference>
<dbReference type="PANTHER" id="PTHR34308:SF1">
    <property type="entry name" value="COBALAMIN BIOSYNTHESIS PROTEIN CBIB"/>
    <property type="match status" value="1"/>
</dbReference>
<dbReference type="Pfam" id="PF03186">
    <property type="entry name" value="CobD_Cbib"/>
    <property type="match status" value="1"/>
</dbReference>
<comment type="function">
    <text evidence="1">Converts cobyric acid to cobinamide by the addition of aminopropanol on the F carboxylic group.</text>
</comment>
<comment type="pathway">
    <text>Cofactor biosynthesis; adenosylcobalamin biosynthesis.</text>
</comment>
<comment type="subcellular location">
    <subcellularLocation>
        <location evidence="3">Cell membrane</location>
        <topology evidence="3">Multi-pass membrane protein</topology>
    </subcellularLocation>
</comment>
<comment type="similarity">
    <text evidence="3">Belongs to the CobD/CbiB family.</text>
</comment>